<name>CSLC1_ORYSJ</name>
<organism>
    <name type="scientific">Oryza sativa subsp. japonica</name>
    <name type="common">Rice</name>
    <dbReference type="NCBI Taxonomy" id="39947"/>
    <lineage>
        <taxon>Eukaryota</taxon>
        <taxon>Viridiplantae</taxon>
        <taxon>Streptophyta</taxon>
        <taxon>Embryophyta</taxon>
        <taxon>Tracheophyta</taxon>
        <taxon>Spermatophyta</taxon>
        <taxon>Magnoliopsida</taxon>
        <taxon>Liliopsida</taxon>
        <taxon>Poales</taxon>
        <taxon>Poaceae</taxon>
        <taxon>BOP clade</taxon>
        <taxon>Oryzoideae</taxon>
        <taxon>Oryzeae</taxon>
        <taxon>Oryzinae</taxon>
        <taxon>Oryza</taxon>
        <taxon>Oryza sativa</taxon>
    </lineage>
</organism>
<proteinExistence type="inferred from homology"/>
<accession>Q8LIY0</accession>
<sequence length="690" mass="76490">MARWWGGEGRGGSGTPVVVKMESPEWAISEVEAGAAAPGSPAAGGKAGRGKNARQITWVLLLKAHRAAGKLTGAASAALSVAAAARRRVAAGRTDSDDAAAAPPGESPALRARFHGFLRAFLLLSVLLLAVDVAAHAQGWHAVVPDLLAVEGLFAAAYASWLRVRLEYLAPGLQFLANACVVLFLIQSADRLILCLGCLWIKLKGIKPVPKASGGGGGGKGSDDVEAGADEFPMVLVQIPMCNEKEVYQQSIGAVCNLDWPRSNFLVQVLDDSDDAATSALIKEEVEKWQREGVRILYRHRVIRDGYKAGNLKSAMNCSYVKDYEFVVIFDADFQPQADFLKRTVPHFKGNEDVGLVQARWSFVNKDENLLTRLQNINLCFHFEVEQQVNGVFLNFFGFNGTAGVWRIKALEDSGGWMERTTVEDMDIAVRAHLKGWKFLYINDVECQCELPESYEAYRKQQHRWHSGPMQLFRLCFVDIIKSKIGVWKKFNLIFLFFLLRKLILPFYSFTLFCIILPMTMFVPEAELPAWVVCYIPATMSLLNILPAPKSFPFIVPYLLFENTMSVTKFNAMISGLFQLGSAYEWVVTKKSGRSSEGDLVSLVEKQPKQQRVGSAPNLDSLAKESHPKKDSKKKKHNRIYQKELALSFLLLTAAARSLLSVQGIHFYFLLFQGVSFLVVGLDLIGEQVE</sequence>
<comment type="function">
    <text evidence="1">Probable beta-1,4-glucan synthase rather involved in the synthesis of the xyloglucan backbone than cellulose. Seems to work simultaneously with xyloglucan 6-xylosyltransferase. Xyloglucan is a noncellulosic polysaccharides of plant cell wall and consists of a glucan backbone substituted by xylose, galactose and fucose (By similarity).</text>
</comment>
<comment type="subcellular location">
    <subcellularLocation>
        <location evidence="4">Golgi apparatus membrane</location>
        <topology evidence="4">Multi-pass membrane protein</topology>
    </subcellularLocation>
</comment>
<comment type="similarity">
    <text evidence="4">Belongs to the glycosyltransferase 2 family. Plant cellulose synthase-like C subfamily.</text>
</comment>
<feature type="chain" id="PRO_0000319382" description="Probable xyloglucan glycosyltransferase 1">
    <location>
        <begin position="1"/>
        <end position="690"/>
    </location>
</feature>
<feature type="transmembrane region" description="Helical" evidence="2">
    <location>
        <begin position="120"/>
        <end position="140"/>
    </location>
</feature>
<feature type="transmembrane region" description="Helical" evidence="2">
    <location>
        <begin position="166"/>
        <end position="186"/>
    </location>
</feature>
<feature type="transmembrane region" description="Helical" evidence="2">
    <location>
        <begin position="503"/>
        <end position="523"/>
    </location>
</feature>
<feature type="transmembrane region" description="Helical" evidence="2">
    <location>
        <begin position="528"/>
        <end position="548"/>
    </location>
</feature>
<feature type="transmembrane region" description="Helical" evidence="2">
    <location>
        <begin position="640"/>
        <end position="659"/>
    </location>
</feature>
<feature type="transmembrane region" description="Helical" evidence="2">
    <location>
        <begin position="665"/>
        <end position="685"/>
    </location>
</feature>
<feature type="region of interest" description="Disordered" evidence="3">
    <location>
        <begin position="607"/>
        <end position="637"/>
    </location>
</feature>
<feature type="active site" evidence="2">
    <location>
        <position position="272"/>
    </location>
</feature>
<feature type="active site" evidence="2">
    <location>
        <position position="425"/>
    </location>
</feature>
<feature type="binding site" evidence="2">
    <location>
        <position position="331"/>
    </location>
    <ligand>
        <name>substrate</name>
    </ligand>
</feature>
<feature type="binding site" evidence="2">
    <location>
        <position position="333"/>
    </location>
    <ligand>
        <name>substrate</name>
    </ligand>
</feature>
<gene>
    <name type="primary">CSLC1</name>
    <name type="ordered locus">Os01g0766900</name>
    <name type="ordered locus">LOC_Os01g56130</name>
    <name type="ORF">OSJNBb0053G03.13</name>
</gene>
<evidence type="ECO:0000250" key="1"/>
<evidence type="ECO:0000255" key="2"/>
<evidence type="ECO:0000256" key="3">
    <source>
        <dbReference type="SAM" id="MobiDB-lite"/>
    </source>
</evidence>
<evidence type="ECO:0000305" key="4"/>
<keyword id="KW-0961">Cell wall biogenesis/degradation</keyword>
<keyword id="KW-0328">Glycosyltransferase</keyword>
<keyword id="KW-0333">Golgi apparatus</keyword>
<keyword id="KW-0472">Membrane</keyword>
<keyword id="KW-1185">Reference proteome</keyword>
<keyword id="KW-0808">Transferase</keyword>
<keyword id="KW-0812">Transmembrane</keyword>
<keyword id="KW-1133">Transmembrane helix</keyword>
<protein>
    <recommendedName>
        <fullName>Probable xyloglucan glycosyltransferase 1</fullName>
        <ecNumber>2.4.1.-</ecNumber>
    </recommendedName>
    <alternativeName>
        <fullName>Cellulose synthase-like protein C1</fullName>
    </alternativeName>
    <alternativeName>
        <fullName>OsCslC1</fullName>
    </alternativeName>
</protein>
<reference key="1">
    <citation type="journal article" date="2002" name="Nature">
        <title>The genome sequence and structure of rice chromosome 1.</title>
        <authorList>
            <person name="Sasaki T."/>
            <person name="Matsumoto T."/>
            <person name="Yamamoto K."/>
            <person name="Sakata K."/>
            <person name="Baba T."/>
            <person name="Katayose Y."/>
            <person name="Wu J."/>
            <person name="Niimura Y."/>
            <person name="Cheng Z."/>
            <person name="Nagamura Y."/>
            <person name="Antonio B.A."/>
            <person name="Kanamori H."/>
            <person name="Hosokawa S."/>
            <person name="Masukawa M."/>
            <person name="Arikawa K."/>
            <person name="Chiden Y."/>
            <person name="Hayashi M."/>
            <person name="Okamoto M."/>
            <person name="Ando T."/>
            <person name="Aoki H."/>
            <person name="Arita K."/>
            <person name="Hamada M."/>
            <person name="Harada C."/>
            <person name="Hijishita S."/>
            <person name="Honda M."/>
            <person name="Ichikawa Y."/>
            <person name="Idonuma A."/>
            <person name="Iijima M."/>
            <person name="Ikeda M."/>
            <person name="Ikeno M."/>
            <person name="Ito S."/>
            <person name="Ito T."/>
            <person name="Ito Y."/>
            <person name="Ito Y."/>
            <person name="Iwabuchi A."/>
            <person name="Kamiya K."/>
            <person name="Karasawa W."/>
            <person name="Katagiri S."/>
            <person name="Kikuta A."/>
            <person name="Kobayashi N."/>
            <person name="Kono I."/>
            <person name="Machita K."/>
            <person name="Maehara T."/>
            <person name="Mizuno H."/>
            <person name="Mizubayashi T."/>
            <person name="Mukai Y."/>
            <person name="Nagasaki H."/>
            <person name="Nakashima M."/>
            <person name="Nakama Y."/>
            <person name="Nakamichi Y."/>
            <person name="Nakamura M."/>
            <person name="Namiki N."/>
            <person name="Negishi M."/>
            <person name="Ohta I."/>
            <person name="Ono N."/>
            <person name="Saji S."/>
            <person name="Sakai K."/>
            <person name="Shibata M."/>
            <person name="Shimokawa T."/>
            <person name="Shomura A."/>
            <person name="Song J."/>
            <person name="Takazaki Y."/>
            <person name="Terasawa K."/>
            <person name="Tsuji K."/>
            <person name="Waki K."/>
            <person name="Yamagata H."/>
            <person name="Yamane H."/>
            <person name="Yoshiki S."/>
            <person name="Yoshihara R."/>
            <person name="Yukawa K."/>
            <person name="Zhong H."/>
            <person name="Iwama H."/>
            <person name="Endo T."/>
            <person name="Ito H."/>
            <person name="Hahn J.H."/>
            <person name="Kim H.-I."/>
            <person name="Eun M.-Y."/>
            <person name="Yano M."/>
            <person name="Jiang J."/>
            <person name="Gojobori T."/>
        </authorList>
    </citation>
    <scope>NUCLEOTIDE SEQUENCE [LARGE SCALE GENOMIC DNA]</scope>
    <source>
        <strain>cv. Nipponbare</strain>
    </source>
</reference>
<reference key="2">
    <citation type="journal article" date="2005" name="Nature">
        <title>The map-based sequence of the rice genome.</title>
        <authorList>
            <consortium name="International rice genome sequencing project (IRGSP)"/>
        </authorList>
    </citation>
    <scope>NUCLEOTIDE SEQUENCE [LARGE SCALE GENOMIC DNA]</scope>
    <source>
        <strain>cv. Nipponbare</strain>
    </source>
</reference>
<reference key="3">
    <citation type="journal article" date="2013" name="Rice">
        <title>Improvement of the Oryza sativa Nipponbare reference genome using next generation sequence and optical map data.</title>
        <authorList>
            <person name="Kawahara Y."/>
            <person name="de la Bastide M."/>
            <person name="Hamilton J.P."/>
            <person name="Kanamori H."/>
            <person name="McCombie W.R."/>
            <person name="Ouyang S."/>
            <person name="Schwartz D.C."/>
            <person name="Tanaka T."/>
            <person name="Wu J."/>
            <person name="Zhou S."/>
            <person name="Childs K.L."/>
            <person name="Davidson R.M."/>
            <person name="Lin H."/>
            <person name="Quesada-Ocampo L."/>
            <person name="Vaillancourt B."/>
            <person name="Sakai H."/>
            <person name="Lee S.S."/>
            <person name="Kim J."/>
            <person name="Numa H."/>
            <person name="Itoh T."/>
            <person name="Buell C.R."/>
            <person name="Matsumoto T."/>
        </authorList>
    </citation>
    <scope>GENOME REANNOTATION</scope>
    <source>
        <strain>cv. Nipponbare</strain>
    </source>
</reference>
<reference key="4">
    <citation type="journal article" date="2002" name="Plant Physiol.">
        <title>Cellulose synthase-like genes of rice.</title>
        <authorList>
            <person name="Hazen S.P."/>
            <person name="Scott-Craig J.S."/>
            <person name="Walton J.D."/>
        </authorList>
    </citation>
    <scope>IDENTIFICATION</scope>
</reference>
<dbReference type="EC" id="2.4.1.-"/>
<dbReference type="EMBL" id="AP003377">
    <property type="protein sequence ID" value="BAC10759.1"/>
    <property type="molecule type" value="Genomic_DNA"/>
</dbReference>
<dbReference type="EMBL" id="AP014957">
    <property type="status" value="NOT_ANNOTATED_CDS"/>
    <property type="molecule type" value="Genomic_DNA"/>
</dbReference>
<dbReference type="EMBL" id="BK000086">
    <property type="protein sequence ID" value="DAA01749.1"/>
    <property type="molecule type" value="Genomic_DNA"/>
</dbReference>
<dbReference type="RefSeq" id="XP_015622214.1">
    <property type="nucleotide sequence ID" value="XM_015766728.1"/>
</dbReference>
<dbReference type="SMR" id="Q8LIY0"/>
<dbReference type="FunCoup" id="Q8LIY0">
    <property type="interactions" value="15"/>
</dbReference>
<dbReference type="STRING" id="39947.Q8LIY0"/>
<dbReference type="CAZy" id="GT2">
    <property type="family name" value="Glycosyltransferase Family 2"/>
</dbReference>
<dbReference type="PaxDb" id="39947-Q8LIY0"/>
<dbReference type="InParanoid" id="Q8LIY0"/>
<dbReference type="OrthoDB" id="72851at2759"/>
<dbReference type="Proteomes" id="UP000000763">
    <property type="component" value="Chromosome 1"/>
</dbReference>
<dbReference type="Proteomes" id="UP000059680">
    <property type="component" value="Chromosome 1"/>
</dbReference>
<dbReference type="GO" id="GO:0005794">
    <property type="term" value="C:Golgi apparatus"/>
    <property type="evidence" value="ECO:0000318"/>
    <property type="project" value="GO_Central"/>
</dbReference>
<dbReference type="GO" id="GO:0000139">
    <property type="term" value="C:Golgi membrane"/>
    <property type="evidence" value="ECO:0007669"/>
    <property type="project" value="UniProtKB-SubCell"/>
</dbReference>
<dbReference type="GO" id="GO:0016757">
    <property type="term" value="F:glycosyltransferase activity"/>
    <property type="evidence" value="ECO:0000318"/>
    <property type="project" value="GO_Central"/>
</dbReference>
<dbReference type="GO" id="GO:0071555">
    <property type="term" value="P:cell wall organization"/>
    <property type="evidence" value="ECO:0007669"/>
    <property type="project" value="UniProtKB-KW"/>
</dbReference>
<dbReference type="FunFam" id="3.90.550.10:FF:000007">
    <property type="entry name" value="probable xyloglucan glycosyltransferase 5"/>
    <property type="match status" value="1"/>
</dbReference>
<dbReference type="Gene3D" id="3.90.550.10">
    <property type="entry name" value="Spore Coat Polysaccharide Biosynthesis Protein SpsA, Chain A"/>
    <property type="match status" value="1"/>
</dbReference>
<dbReference type="InterPro" id="IPR001173">
    <property type="entry name" value="Glyco_trans_2-like"/>
</dbReference>
<dbReference type="InterPro" id="IPR029044">
    <property type="entry name" value="Nucleotide-diphossugar_trans"/>
</dbReference>
<dbReference type="PANTHER" id="PTHR32044">
    <property type="entry name" value="GLUCOMANNAN 4-BETA-MANNOSYLTRANSFERASE 9"/>
    <property type="match status" value="1"/>
</dbReference>
<dbReference type="PANTHER" id="PTHR32044:SF44">
    <property type="entry name" value="XYLOGLUCAN GLYCOSYLTRANSFERASE 12-RELATED"/>
    <property type="match status" value="1"/>
</dbReference>
<dbReference type="Pfam" id="PF13632">
    <property type="entry name" value="Glyco_trans_2_3"/>
    <property type="match status" value="1"/>
</dbReference>
<dbReference type="SUPFAM" id="SSF53448">
    <property type="entry name" value="Nucleotide-diphospho-sugar transferases"/>
    <property type="match status" value="1"/>
</dbReference>